<protein>
    <recommendedName>
        <fullName>Anoctamin-7</fullName>
    </recommendedName>
    <alternativeName>
        <fullName>Dresden transmembrane protein of the prostate</fullName>
        <shortName>D-TMPP</shortName>
    </alternativeName>
    <alternativeName>
        <fullName>IPCA-5</fullName>
    </alternativeName>
    <alternativeName>
        <fullName>New gene expressed in prostate</fullName>
    </alternativeName>
    <alternativeName>
        <fullName>Prostate cancer-associated protein 5</fullName>
    </alternativeName>
    <alternativeName>
        <fullName>Transmembrane protein 16G</fullName>
    </alternativeName>
</protein>
<name>ANO7_HUMAN</name>
<comment type="function">
    <text evidence="1 6 9">Has calcium-dependent phospholipid scramblase activity; scrambles phosphatidylserine, phosphatidylcholine and galactosylceramide (By similarity). Does not exhibit calcium-activated chloride channel (CaCC) activity (PubMed:22075693). May play a role in cell-cell interactions (PubMed:17308099).</text>
</comment>
<comment type="catalytic activity">
    <reaction evidence="1">
        <text>a 1,2-diacyl-sn-glycero-3-phospho-L-serine(in) = a 1,2-diacyl-sn-glycero-3-phospho-L-serine(out)</text>
        <dbReference type="Rhea" id="RHEA:38663"/>
        <dbReference type="ChEBI" id="CHEBI:57262"/>
    </reaction>
    <physiologicalReaction direction="left-to-right" evidence="1">
        <dbReference type="Rhea" id="RHEA:38664"/>
    </physiologicalReaction>
</comment>
<comment type="catalytic activity">
    <reaction evidence="1">
        <text>a beta-D-galactosyl-(1&lt;-&gt;1')-N-acylsphing-4-enine(out) = a beta-D-galactosyl-(1&lt;-&gt;1')-N-acylsphing-4-enine(in)</text>
        <dbReference type="Rhea" id="RHEA:38899"/>
        <dbReference type="ChEBI" id="CHEBI:18390"/>
    </reaction>
    <physiologicalReaction direction="left-to-right" evidence="1">
        <dbReference type="Rhea" id="RHEA:38900"/>
    </physiologicalReaction>
</comment>
<comment type="catalytic activity">
    <reaction evidence="1">
        <text>a 1,2-diacyl-sn-glycero-3-phosphocholine(in) = a 1,2-diacyl-sn-glycero-3-phosphocholine(out)</text>
        <dbReference type="Rhea" id="RHEA:38571"/>
        <dbReference type="ChEBI" id="CHEBI:57643"/>
    </reaction>
    <physiologicalReaction direction="right-to-left" evidence="1">
        <dbReference type="Rhea" id="RHEA:38573"/>
    </physiologicalReaction>
</comment>
<comment type="subcellular location">
    <molecule>Isoform 1</molecule>
    <subcellularLocation>
        <location evidence="4 6 8 10">Cell membrane</location>
        <topology evidence="2">Multi-pass membrane protein</topology>
    </subcellularLocation>
    <subcellularLocation>
        <location evidence="6">Cell junction</location>
    </subcellularLocation>
    <subcellularLocation>
        <location evidence="9">Endoplasmic reticulum</location>
    </subcellularLocation>
    <text evidence="6 8 9">Concentrates at sites of cell-cell contact (PubMed:17308099). Shows an intracellular localization according to PubMed:22075693 and PubMed:20056604.</text>
</comment>
<comment type="subcellular location">
    <molecule>Isoform 2</molecule>
    <subcellularLocation>
        <location evidence="4">Cytoplasm</location>
        <location evidence="4">Cytosol</location>
    </subcellularLocation>
</comment>
<comment type="alternative products">
    <event type="alternative splicing"/>
    <isoform>
        <id>Q6IWH7-1</id>
        <name>1</name>
        <name>NGEP-L</name>
        <sequence type="displayed"/>
    </isoform>
    <isoform>
        <id>Q6IWH7-2</id>
        <name>2</name>
        <name>NGEP-S</name>
        <sequence type="described" ref="VSP_026004 VSP_026005 VSP_026006"/>
    </isoform>
    <isoform>
        <id>Q6IWH7-3</id>
        <name>3</name>
        <name>D-TMPP</name>
        <sequence type="described" ref="VSP_026004 VSP_026007 VSP_026008"/>
    </isoform>
</comment>
<comment type="tissue specificity">
    <text evidence="4 5 6">Specifically expressed in epithelial cells of the prostate (at protein level).</text>
</comment>
<comment type="induction">
    <text evidence="5">Up-regulated by androgen.</text>
</comment>
<comment type="miscellaneous">
    <text>The term 'anoctamin' was coined because these channels are anion selective and have eight (OCT) transmembrane segments. There is some dissatisfaction in the field with the Ano nomenclature because it is not certain that all the members of this family are anion channels or have the 8-transmembrane topology.</text>
</comment>
<comment type="similarity">
    <text evidence="12">Belongs to the anoctamin family.</text>
</comment>
<comment type="caution">
    <text evidence="12">It is uncertain whether Met-1 or Met-55 is the initiator.</text>
</comment>
<proteinExistence type="evidence at protein level"/>
<gene>
    <name type="primary">ANO7</name>
    <name type="synonym">NGEP</name>
    <name type="synonym">PCANAP5</name>
    <name type="synonym">TMEM16G</name>
</gene>
<feature type="chain" id="PRO_0000289326" description="Anoctamin-7">
    <location>
        <begin position="1"/>
        <end position="933"/>
    </location>
</feature>
<feature type="topological domain" description="Cytoplasmic" evidence="2">
    <location>
        <begin position="1"/>
        <end position="355"/>
    </location>
</feature>
<feature type="transmembrane region" description="Helical" evidence="2">
    <location>
        <begin position="356"/>
        <end position="376"/>
    </location>
</feature>
<feature type="topological domain" description="Extracellular" evidence="2">
    <location>
        <begin position="377"/>
        <end position="420"/>
    </location>
</feature>
<feature type="transmembrane region" description="Helical" evidence="2">
    <location>
        <begin position="421"/>
        <end position="441"/>
    </location>
</feature>
<feature type="topological domain" description="Cytoplasmic" evidence="2">
    <location>
        <begin position="442"/>
        <end position="499"/>
    </location>
</feature>
<feature type="transmembrane region" description="Helical" evidence="2">
    <location>
        <begin position="500"/>
        <end position="520"/>
    </location>
</feature>
<feature type="topological domain" description="Extracellular" evidence="2">
    <location>
        <begin position="521"/>
        <end position="550"/>
    </location>
</feature>
<feature type="transmembrane region" description="Helical" evidence="2">
    <location>
        <begin position="551"/>
        <end position="571"/>
    </location>
</feature>
<feature type="topological domain" description="Cytoplasmic" evidence="2">
    <location>
        <begin position="572"/>
        <end position="588"/>
    </location>
</feature>
<feature type="transmembrane region" description="Helical" evidence="2">
    <location>
        <begin position="589"/>
        <end position="609"/>
    </location>
</feature>
<feature type="topological domain" description="Extracellular" evidence="2">
    <location>
        <begin position="610"/>
        <end position="714"/>
    </location>
</feature>
<feature type="transmembrane region" description="Helical" evidence="2">
    <location>
        <begin position="715"/>
        <end position="735"/>
    </location>
</feature>
<feature type="topological domain" description="Cytoplasmic" evidence="2">
    <location>
        <begin position="736"/>
        <end position="763"/>
    </location>
</feature>
<feature type="transmembrane region" description="Helical" evidence="2">
    <location>
        <begin position="764"/>
        <end position="784"/>
    </location>
</feature>
<feature type="topological domain" description="Extracellular" evidence="2">
    <location>
        <begin position="785"/>
        <end position="843"/>
    </location>
</feature>
<feature type="transmembrane region" description="Helical" evidence="2">
    <location>
        <begin position="844"/>
        <end position="864"/>
    </location>
</feature>
<feature type="topological domain" description="Cytoplasmic" evidence="2">
    <location>
        <begin position="865"/>
        <end position="933"/>
    </location>
</feature>
<feature type="region of interest" description="Disordered" evidence="3">
    <location>
        <begin position="43"/>
        <end position="101"/>
    </location>
</feature>
<feature type="region of interest" description="Disordered" evidence="3">
    <location>
        <begin position="902"/>
        <end position="933"/>
    </location>
</feature>
<feature type="compositionally biased region" description="Polar residues" evidence="3">
    <location>
        <begin position="915"/>
        <end position="933"/>
    </location>
</feature>
<feature type="glycosylation site" description="N-linked (GlcNAc...) asparagine" evidence="7">
    <location>
        <position position="809"/>
    </location>
</feature>
<feature type="glycosylation site" description="N-linked (GlcNAc...) asparagine" evidence="7">
    <location>
        <position position="824"/>
    </location>
</feature>
<feature type="splice variant" id="VSP_026004" description="In isoform 2 and isoform 3." evidence="11">
    <location>
        <position position="110"/>
    </location>
</feature>
<feature type="splice variant" id="VSP_026005" description="In isoform 2." evidence="11">
    <original>QDVQDGNTTVHYALLSASWAVLC</original>
    <variation>VRGGCHGQGPRPCIHSVTHDLAA</variation>
    <location>
        <begin position="158"/>
        <end position="180"/>
    </location>
</feature>
<feature type="splice variant" id="VSP_026006" description="In isoform 2." evidence="11">
    <location>
        <begin position="181"/>
        <end position="933"/>
    </location>
</feature>
<feature type="splice variant" id="VSP_026007" description="In isoform 3." evidence="12">
    <original>H</original>
    <variation>VAEAPAGSPIHGMRPRPCALPNSSTW</variation>
    <location>
        <position position="859"/>
    </location>
</feature>
<feature type="splice variant" id="VSP_026008" description="In isoform 3." evidence="12">
    <location>
        <begin position="860"/>
        <end position="933"/>
    </location>
</feature>
<feature type="sequence variant" id="VAR_032616" description="In dbSNP:rs2302054.">
    <original>V</original>
    <variation>I</variation>
    <location>
        <position position="67"/>
    </location>
</feature>
<feature type="sequence variant" id="VAR_065166" description="In dbSNP:rs7590653." evidence="4">
    <original>E</original>
    <variation>K</variation>
    <location>
        <position position="912"/>
    </location>
</feature>
<accession>Q6IWH7</accession>
<accession>Q6IWH6</accession>
<sequence length="933" mass="105532">MRMAATAWAGLQGPPLPTLCPAVRTGLYCRDQAHAERWAMTSETSSGSHCARSRMLRRRAQEEDSTVLIDVSPPEAEKRGSYGSTAHASEPGGQQAAACRAGSPAKPRIADFVLVWEEDLKLDRQQDSAARDRTDMHRTWRETFLDNLRAAGLCVDQQDVQDGNTTVHYALLSASWAVLCYYAEDLRLKLPLQELPNQASNWSAGLLAWLGIPNVLLEVVPDVPPEYYSCRFRVNKLPRFLGSDNQDTFFTSTKRHQILFEILAKTPYGHEKKNLLGIHQLLAEGVLSAAFPLHDGPFKTPPEGPQAPRLNQRQVLFQHWARWGKWNKYQPLDHVRRYFGEKVALYFAWLGFYTGWLLPAAVVGTLVFLVGCFLVFSDIPTQELCGSKDSFEMCPLCLDCPFWLLSSACALAQAGRLFDHGGTVFFSLFMALWAVLLLEYWKRKSATLAYRWDCSDYEDTEERPRPQFAASAPMTAPNPITGEDEPYFPERSRARRMLAGSVVIVVMVAVVVMCLVSIILYRAIMAIVVSRSGNTLLAAWASRIASLTGSVVNLVFILILSKIYVSLAHVLTRWEMHRTQTKFEDAFTLKVFIFQFVNFYSSPVYIAFFKGRFVGYPGNYHTLFGVRNEECAAGGCLIELAQELLVIMVGKQVINNMQEVLIPKLKGWWQKFRLRSKKRKAGASAGASQGPWEDDYELVPCEGLFDEYLEMVLQFGFVTIFVAACPLAPLFALLNNWVEIRLDARKFVCEYRRPVAERAQDIGIWFHILAGLTHLAVISNAFLLAFSSDFLPRAYYRWTRAHDLRGFLNFTLARAPSSFAAAHNRTCRYRAFRDDDGHYSQTYWNLLAIRLAFVIVFEHVVFSVGRLLDLLVPDIPESVEIKVKREYYLAKQALAENEVLFGTNGTKDEQPEGSELSSHWTPFTVPKASQLQQ</sequence>
<evidence type="ECO:0000250" key="1">
    <source>
        <dbReference type="UniProtKB" id="Q14AT5"/>
    </source>
</evidence>
<evidence type="ECO:0000255" key="2"/>
<evidence type="ECO:0000256" key="3">
    <source>
        <dbReference type="SAM" id="MobiDB-lite"/>
    </source>
</evidence>
<evidence type="ECO:0000269" key="4">
    <source>
    </source>
</evidence>
<evidence type="ECO:0000269" key="5">
    <source>
    </source>
</evidence>
<evidence type="ECO:0000269" key="6">
    <source>
    </source>
</evidence>
<evidence type="ECO:0000269" key="7">
    <source>
    </source>
</evidence>
<evidence type="ECO:0000269" key="8">
    <source>
    </source>
</evidence>
<evidence type="ECO:0000269" key="9">
    <source>
    </source>
</evidence>
<evidence type="ECO:0000269" key="10">
    <source>
    </source>
</evidence>
<evidence type="ECO:0000303" key="11">
    <source>
    </source>
</evidence>
<evidence type="ECO:0000305" key="12"/>
<reference key="1">
    <citation type="journal article" date="2004" name="Proc. Natl. Acad. Sci. U.S.A.">
        <title>NGEP, a gene encoding a membrane protein detected only in prostate cancer and normal prostate.</title>
        <authorList>
            <person name="Bera T.K."/>
            <person name="Das S."/>
            <person name="Maeda H."/>
            <person name="Beers R."/>
            <person name="Wolfgang C.D."/>
            <person name="Kumar V."/>
            <person name="Hahn Y."/>
            <person name="Lee B."/>
            <person name="Pastan I."/>
        </authorList>
    </citation>
    <scope>NUCLEOTIDE SEQUENCE [MRNA] (ISOFORMS 1 AND 2)</scope>
    <scope>VARIANT LYS-912</scope>
    <scope>TISSUE SPECIFICITY</scope>
    <scope>SUBCELLULAR LOCATION</scope>
    <scope>TOPOLOGY</scope>
</reference>
<reference key="2">
    <citation type="journal article" date="2005" name="Nature">
        <title>Generation and annotation of the DNA sequences of human chromosomes 2 and 4.</title>
        <authorList>
            <person name="Hillier L.W."/>
            <person name="Graves T.A."/>
            <person name="Fulton R.S."/>
            <person name="Fulton L.A."/>
            <person name="Pepin K.H."/>
            <person name="Minx P."/>
            <person name="Wagner-McPherson C."/>
            <person name="Layman D."/>
            <person name="Wylie K."/>
            <person name="Sekhon M."/>
            <person name="Becker M.C."/>
            <person name="Fewell G.A."/>
            <person name="Delehaunty K.D."/>
            <person name="Miner T.L."/>
            <person name="Nash W.E."/>
            <person name="Kremitzki C."/>
            <person name="Oddy L."/>
            <person name="Du H."/>
            <person name="Sun H."/>
            <person name="Bradshaw-Cordum H."/>
            <person name="Ali J."/>
            <person name="Carter J."/>
            <person name="Cordes M."/>
            <person name="Harris A."/>
            <person name="Isak A."/>
            <person name="van Brunt A."/>
            <person name="Nguyen C."/>
            <person name="Du F."/>
            <person name="Courtney L."/>
            <person name="Kalicki J."/>
            <person name="Ozersky P."/>
            <person name="Abbott S."/>
            <person name="Armstrong J."/>
            <person name="Belter E.A."/>
            <person name="Caruso L."/>
            <person name="Cedroni M."/>
            <person name="Cotton M."/>
            <person name="Davidson T."/>
            <person name="Desai A."/>
            <person name="Elliott G."/>
            <person name="Erb T."/>
            <person name="Fronick C."/>
            <person name="Gaige T."/>
            <person name="Haakenson W."/>
            <person name="Haglund K."/>
            <person name="Holmes A."/>
            <person name="Harkins R."/>
            <person name="Kim K."/>
            <person name="Kruchowski S.S."/>
            <person name="Strong C.M."/>
            <person name="Grewal N."/>
            <person name="Goyea E."/>
            <person name="Hou S."/>
            <person name="Levy A."/>
            <person name="Martinka S."/>
            <person name="Mead K."/>
            <person name="McLellan M.D."/>
            <person name="Meyer R."/>
            <person name="Randall-Maher J."/>
            <person name="Tomlinson C."/>
            <person name="Dauphin-Kohlberg S."/>
            <person name="Kozlowicz-Reilly A."/>
            <person name="Shah N."/>
            <person name="Swearengen-Shahid S."/>
            <person name="Snider J."/>
            <person name="Strong J.T."/>
            <person name="Thompson J."/>
            <person name="Yoakum M."/>
            <person name="Leonard S."/>
            <person name="Pearman C."/>
            <person name="Trani L."/>
            <person name="Radionenko M."/>
            <person name="Waligorski J.E."/>
            <person name="Wang C."/>
            <person name="Rock S.M."/>
            <person name="Tin-Wollam A.-M."/>
            <person name="Maupin R."/>
            <person name="Latreille P."/>
            <person name="Wendl M.C."/>
            <person name="Yang S.-P."/>
            <person name="Pohl C."/>
            <person name="Wallis J.W."/>
            <person name="Spieth J."/>
            <person name="Bieri T.A."/>
            <person name="Berkowicz N."/>
            <person name="Nelson J.O."/>
            <person name="Osborne J."/>
            <person name="Ding L."/>
            <person name="Meyer R."/>
            <person name="Sabo A."/>
            <person name="Shotland Y."/>
            <person name="Sinha P."/>
            <person name="Wohldmann P.E."/>
            <person name="Cook L.L."/>
            <person name="Hickenbotham M.T."/>
            <person name="Eldred J."/>
            <person name="Williams D."/>
            <person name="Jones T.A."/>
            <person name="She X."/>
            <person name="Ciccarelli F.D."/>
            <person name="Izaurralde E."/>
            <person name="Taylor J."/>
            <person name="Schmutz J."/>
            <person name="Myers R.M."/>
            <person name="Cox D.R."/>
            <person name="Huang X."/>
            <person name="McPherson J.D."/>
            <person name="Mardis E.R."/>
            <person name="Clifton S.W."/>
            <person name="Warren W.C."/>
            <person name="Chinwalla A.T."/>
            <person name="Eddy S.R."/>
            <person name="Marra M.A."/>
            <person name="Ovcharenko I."/>
            <person name="Furey T.S."/>
            <person name="Miller W."/>
            <person name="Eichler E.E."/>
            <person name="Bork P."/>
            <person name="Suyama M."/>
            <person name="Torrents D."/>
            <person name="Waterston R.H."/>
            <person name="Wilson R.K."/>
        </authorList>
    </citation>
    <scope>NUCLEOTIDE SEQUENCE [LARGE SCALE GENOMIC DNA]</scope>
</reference>
<reference key="3">
    <citation type="journal article" date="1999" name="Genome Res.">
        <title>Prediction of gene function by genome-scale expression analysis: prostate cancer-associated genes.</title>
        <authorList>
            <person name="Walker M.G."/>
            <person name="Volkmuth W."/>
            <person name="Sprinzak E."/>
            <person name="Hodgson D."/>
            <person name="Klingler T."/>
        </authorList>
    </citation>
    <scope>IDENTIFICATION</scope>
</reference>
<reference key="4">
    <citation type="journal article" date="2004" name="Int. J. Mol. Med.">
        <title>Characterization of human TMEM16G gene in silico.</title>
        <authorList>
            <person name="Katoh M."/>
            <person name="Katoh M."/>
        </authorList>
    </citation>
    <scope>IDENTIFICATION</scope>
</reference>
<reference key="5">
    <citation type="journal article" date="2005" name="Prostate">
        <title>D-TMPP: a novel androgen-regulated gene preferentially expressed in prostate and prostate cancer that is the first characterized member of an eukaryotic gene family.</title>
        <authorList>
            <person name="Kiessling A."/>
            <person name="Weigle B."/>
            <person name="Fuessel S."/>
            <person name="Ebner R."/>
            <person name="Meye A."/>
            <person name="Rieger M.A."/>
            <person name="Schmitz M."/>
            <person name="Temme A."/>
            <person name="Bachmann M."/>
            <person name="Wirth M.P."/>
            <person name="Rieber E.P."/>
        </authorList>
    </citation>
    <scope>ALTERNATIVE SPLICING (ISOFORM 3)</scope>
    <scope>TISSUE SPECIFICITY</scope>
    <scope>INDUCTION BY ANDROGEN</scope>
</reference>
<reference key="6">
    <citation type="journal article" date="2007" name="Cancer Res.">
        <title>NGEP, a prostate-specific plasma membrane protein that promotes the association of LNCaP cells.</title>
        <authorList>
            <person name="Das S."/>
            <person name="Hahn Y."/>
            <person name="Nagata S."/>
            <person name="Willingham M.C."/>
            <person name="Bera T.K."/>
            <person name="Lee B."/>
            <person name="Pastan I."/>
        </authorList>
    </citation>
    <scope>FUNCTION</scope>
    <scope>SUBCELLULAR LOCATION</scope>
    <scope>TISSUE SPECIFICITY</scope>
</reference>
<reference key="7">
    <citation type="journal article" date="2008" name="Cancer Res.">
        <title>Topology of NGEP, a prostate-specific cell:cell junction protein widely expressed in many cancers of different grade level.</title>
        <authorList>
            <person name="Das S."/>
            <person name="Hahn Y."/>
            <person name="Walker D.A."/>
            <person name="Nagata S."/>
            <person name="Willingham M.C."/>
            <person name="Peehl D.M."/>
            <person name="Bera T.K."/>
            <person name="Lee B."/>
            <person name="Pastan I."/>
        </authorList>
    </citation>
    <scope>GLYCOSYLATION AT ASN-809 AND ASN-824</scope>
    <scope>MEMBRANE TOPOLOGY</scope>
</reference>
<reference key="8">
    <citation type="journal article" date="2010" name="J. Biol. Chem.">
        <title>Expression and function of epithelial anoctamins.</title>
        <authorList>
            <person name="Schreiber R."/>
            <person name="Uliyakina I."/>
            <person name="Kongsuphol P."/>
            <person name="Warth R."/>
            <person name="Mirza M."/>
            <person name="Martins J.R."/>
            <person name="Kunzelmann K."/>
        </authorList>
    </citation>
    <scope>SUBCELLULAR LOCATION</scope>
</reference>
<reference key="9">
    <citation type="journal article" date="2011" name="Acta Pharmacol. Sin.">
        <title>Physiological roles and diseases of Tmem16/Anoctamin proteins: are they all chloride channels?</title>
        <authorList>
            <person name="Duran C."/>
            <person name="Hartzell H.C."/>
        </authorList>
    </citation>
    <scope>REVIEW</scope>
</reference>
<reference key="10">
    <citation type="journal article" date="2011" name="Pflugers Arch.">
        <title>Anoctamins.</title>
        <authorList>
            <person name="Kunzelmann K."/>
            <person name="Tian Y."/>
            <person name="Martins J.R."/>
            <person name="Faria D."/>
            <person name="Kongsuphol P."/>
            <person name="Ousingsawat J."/>
            <person name="Thevenod F."/>
            <person name="Roussa E."/>
            <person name="Rock J."/>
            <person name="Schreiber R."/>
        </authorList>
    </citation>
    <scope>REVIEW</scope>
</reference>
<reference key="11">
    <citation type="journal article" date="2012" name="Am. J. Physiol.">
        <title>ANOs 3-7 in the anoctamin/Tmem16 Cl- channel family are intracellular proteins.</title>
        <authorList>
            <person name="Duran C."/>
            <person name="Qu Z."/>
            <person name="Osunkoya A.O."/>
            <person name="Cui Y."/>
            <person name="Hartzell H.C."/>
        </authorList>
    </citation>
    <scope>ABSENCE OF CALCIUM-ACTIVATED CHLORIDE CHANNEL ACTIVITY</scope>
    <scope>SUBCELLULAR LOCATION</scope>
</reference>
<reference key="12">
    <citation type="journal article" date="2012" name="Exp. Physiol.">
        <title>The anoctamin (TMEM16) gene family: calcium-activated chloride channels come of age.</title>
        <authorList>
            <person name="Winpenny J.P."/>
            <person name="Gray M.A."/>
        </authorList>
    </citation>
    <scope>REVIEW</scope>
</reference>
<reference key="13">
    <citation type="journal article" date="2012" name="Exp. Physiol.">
        <title>The anoctamin family: TMEM16A and TMEM16B as calcium-activated chloride channels.</title>
        <authorList>
            <person name="Scudieri P."/>
            <person name="Sondo E."/>
            <person name="Ferrera L."/>
            <person name="Galietta L.J."/>
        </authorList>
    </citation>
    <scope>REVIEW</scope>
    <scope>ABSENCE OF CALCIUM-ACTIVATED CHLORIDE CHANNEL ACTIVITY</scope>
</reference>
<reference key="14">
    <citation type="journal article" date="2012" name="J. Cell Sci.">
        <title>Anoctamins are a family of Ca2+ activated Cl- channels.</title>
        <authorList>
            <person name="Tian Y."/>
            <person name="Schreiber R."/>
            <person name="Kunzelmann K."/>
        </authorList>
    </citation>
    <scope>SUBCELLULAR LOCATION</scope>
</reference>
<organism>
    <name type="scientific">Homo sapiens</name>
    <name type="common">Human</name>
    <dbReference type="NCBI Taxonomy" id="9606"/>
    <lineage>
        <taxon>Eukaryota</taxon>
        <taxon>Metazoa</taxon>
        <taxon>Chordata</taxon>
        <taxon>Craniata</taxon>
        <taxon>Vertebrata</taxon>
        <taxon>Euteleostomi</taxon>
        <taxon>Mammalia</taxon>
        <taxon>Eutheria</taxon>
        <taxon>Euarchontoglires</taxon>
        <taxon>Primates</taxon>
        <taxon>Haplorrhini</taxon>
        <taxon>Catarrhini</taxon>
        <taxon>Hominidae</taxon>
        <taxon>Homo</taxon>
    </lineage>
</organism>
<dbReference type="EMBL" id="AY617079">
    <property type="protein sequence ID" value="AAT40139.1"/>
    <property type="molecule type" value="mRNA"/>
</dbReference>
<dbReference type="EMBL" id="AY617080">
    <property type="protein sequence ID" value="AAT40140.1"/>
    <property type="molecule type" value="mRNA"/>
</dbReference>
<dbReference type="EMBL" id="AC005237">
    <property type="status" value="NOT_ANNOTATED_CDS"/>
    <property type="molecule type" value="Genomic_DNA"/>
</dbReference>
<dbReference type="EMBL" id="AC104841">
    <property type="status" value="NOT_ANNOTATED_CDS"/>
    <property type="molecule type" value="Genomic_DNA"/>
</dbReference>
<dbReference type="EMBL" id="AC111201">
    <property type="status" value="NOT_ANNOTATED_CDS"/>
    <property type="molecule type" value="Genomic_DNA"/>
</dbReference>
<dbReference type="RefSeq" id="NP_001001666.1">
    <property type="nucleotide sequence ID" value="NM_001001666.3"/>
</dbReference>
<dbReference type="RefSeq" id="NP_001001891.2">
    <property type="nucleotide sequence ID" value="NM_001001891.3"/>
</dbReference>
<dbReference type="SMR" id="Q6IWH7"/>
<dbReference type="BioGRID" id="119107">
    <property type="interactions" value="69"/>
</dbReference>
<dbReference type="FunCoup" id="Q6IWH7">
    <property type="interactions" value="282"/>
</dbReference>
<dbReference type="STRING" id="9606.ENSP00000274979"/>
<dbReference type="TCDB" id="1.A.17.1.27">
    <property type="family name" value="the calcium-dependent chloride channel (ca-clc) family"/>
</dbReference>
<dbReference type="GlyCosmos" id="Q6IWH7">
    <property type="glycosylation" value="2 sites, No reported glycans"/>
</dbReference>
<dbReference type="GlyGen" id="Q6IWH7">
    <property type="glycosylation" value="2 sites, 1 N-linked glycan (1 site)"/>
</dbReference>
<dbReference type="iPTMnet" id="Q6IWH7"/>
<dbReference type="PhosphoSitePlus" id="Q6IWH7"/>
<dbReference type="BioMuta" id="ANO7"/>
<dbReference type="DMDM" id="334302764"/>
<dbReference type="jPOST" id="Q6IWH7"/>
<dbReference type="MassIVE" id="Q6IWH7"/>
<dbReference type="PaxDb" id="9606-ENSP00000274979"/>
<dbReference type="PeptideAtlas" id="Q6IWH7"/>
<dbReference type="ProteomicsDB" id="66501">
    <molecule id="Q6IWH7-1"/>
</dbReference>
<dbReference type="ProteomicsDB" id="66502">
    <molecule id="Q6IWH7-2"/>
</dbReference>
<dbReference type="ProteomicsDB" id="66503">
    <molecule id="Q6IWH7-3"/>
</dbReference>
<dbReference type="Antibodypedia" id="47723">
    <property type="antibodies" value="121 antibodies from 26 providers"/>
</dbReference>
<dbReference type="DNASU" id="50636"/>
<dbReference type="Ensembl" id="ENST00000274979.12">
    <molecule id="Q6IWH7-1"/>
    <property type="protein sequence ID" value="ENSP00000274979.8"/>
    <property type="gene ID" value="ENSG00000146205.15"/>
</dbReference>
<dbReference type="GeneID" id="50636"/>
<dbReference type="KEGG" id="hsa:50636"/>
<dbReference type="UCSC" id="uc002waw.4">
    <molecule id="Q6IWH7-1"/>
    <property type="organism name" value="human"/>
</dbReference>
<dbReference type="AGR" id="HGNC:31677"/>
<dbReference type="CTD" id="50636"/>
<dbReference type="DisGeNET" id="50636"/>
<dbReference type="GeneCards" id="ANO7"/>
<dbReference type="HGNC" id="HGNC:31677">
    <property type="gene designation" value="ANO7"/>
</dbReference>
<dbReference type="HPA" id="ENSG00000146205">
    <property type="expression patterns" value="Tissue enhanced (intestine, prostate, stomach)"/>
</dbReference>
<dbReference type="MIM" id="605096">
    <property type="type" value="gene"/>
</dbReference>
<dbReference type="neXtProt" id="NX_Q6IWH7"/>
<dbReference type="OpenTargets" id="ENSG00000146205"/>
<dbReference type="PharmGKB" id="PA32980"/>
<dbReference type="VEuPathDB" id="HostDB:ENSG00000146205"/>
<dbReference type="eggNOG" id="KOG2514">
    <property type="taxonomic scope" value="Eukaryota"/>
</dbReference>
<dbReference type="GeneTree" id="ENSGT00940000158551"/>
<dbReference type="HOGENOM" id="CLU_1502990_0_0_1"/>
<dbReference type="InParanoid" id="Q6IWH7"/>
<dbReference type="OMA" id="GLYCQDQ"/>
<dbReference type="OrthoDB" id="296386at2759"/>
<dbReference type="PAN-GO" id="Q6IWH7">
    <property type="GO annotations" value="4 GO annotations based on evolutionary models"/>
</dbReference>
<dbReference type="PhylomeDB" id="Q6IWH7"/>
<dbReference type="TreeFam" id="TF314265"/>
<dbReference type="PathwayCommons" id="Q6IWH7"/>
<dbReference type="Reactome" id="R-HSA-2672351">
    <property type="pathway name" value="Stimuli-sensing channels"/>
</dbReference>
<dbReference type="Reactome" id="R-HSA-9733458">
    <property type="pathway name" value="Induction of Cell-Cell Fusion"/>
</dbReference>
<dbReference type="BioGRID-ORCS" id="50636">
    <property type="hits" value="5 hits in 1149 CRISPR screens"/>
</dbReference>
<dbReference type="ChiTaRS" id="ANO7">
    <property type="organism name" value="human"/>
</dbReference>
<dbReference type="GenomeRNAi" id="50636"/>
<dbReference type="Pharos" id="Q6IWH7">
    <property type="development level" value="Tbio"/>
</dbReference>
<dbReference type="PRO" id="PR:Q6IWH7"/>
<dbReference type="Proteomes" id="UP000005640">
    <property type="component" value="Chromosome 2"/>
</dbReference>
<dbReference type="RNAct" id="Q6IWH7">
    <property type="molecule type" value="protein"/>
</dbReference>
<dbReference type="Bgee" id="ENSG00000146205">
    <property type="expression patterns" value="Expressed in mucosa of transverse colon and 108 other cell types or tissues"/>
</dbReference>
<dbReference type="ExpressionAtlas" id="Q6IWH7">
    <property type="expression patterns" value="baseline and differential"/>
</dbReference>
<dbReference type="GO" id="GO:0070161">
    <property type="term" value="C:anchoring junction"/>
    <property type="evidence" value="ECO:0007669"/>
    <property type="project" value="UniProtKB-SubCell"/>
</dbReference>
<dbReference type="GO" id="GO:0005829">
    <property type="term" value="C:cytosol"/>
    <property type="evidence" value="ECO:0007669"/>
    <property type="project" value="UniProtKB-SubCell"/>
</dbReference>
<dbReference type="GO" id="GO:0005783">
    <property type="term" value="C:endoplasmic reticulum"/>
    <property type="evidence" value="ECO:0000314"/>
    <property type="project" value="UniProtKB"/>
</dbReference>
<dbReference type="GO" id="GO:0005886">
    <property type="term" value="C:plasma membrane"/>
    <property type="evidence" value="ECO:0000314"/>
    <property type="project" value="UniProtKB"/>
</dbReference>
<dbReference type="GO" id="GO:0005254">
    <property type="term" value="F:chloride channel activity"/>
    <property type="evidence" value="ECO:0000318"/>
    <property type="project" value="GO_Central"/>
</dbReference>
<dbReference type="GO" id="GO:0005229">
    <property type="term" value="F:intracellularly calcium-gated chloride channel activity"/>
    <property type="evidence" value="ECO:0000314"/>
    <property type="project" value="UniProtKB"/>
</dbReference>
<dbReference type="GO" id="GO:0046983">
    <property type="term" value="F:protein dimerization activity"/>
    <property type="evidence" value="ECO:0007669"/>
    <property type="project" value="InterPro"/>
</dbReference>
<dbReference type="GO" id="GO:0061588">
    <property type="term" value="P:calcium activated phospholipid scrambling"/>
    <property type="evidence" value="ECO:0000318"/>
    <property type="project" value="GO_Central"/>
</dbReference>
<dbReference type="GO" id="GO:1902476">
    <property type="term" value="P:chloride transmembrane transport"/>
    <property type="evidence" value="ECO:0000314"/>
    <property type="project" value="UniProtKB"/>
</dbReference>
<dbReference type="GO" id="GO:0034220">
    <property type="term" value="P:monoatomic ion transmembrane transport"/>
    <property type="evidence" value="ECO:0000304"/>
    <property type="project" value="Reactome"/>
</dbReference>
<dbReference type="InterPro" id="IPR032394">
    <property type="entry name" value="Anoct_dimer"/>
</dbReference>
<dbReference type="InterPro" id="IPR007632">
    <property type="entry name" value="Anoctamin"/>
</dbReference>
<dbReference type="InterPro" id="IPR049452">
    <property type="entry name" value="Anoctamin_TM"/>
</dbReference>
<dbReference type="PANTHER" id="PTHR12308">
    <property type="entry name" value="ANOCTAMIN"/>
    <property type="match status" value="1"/>
</dbReference>
<dbReference type="PANTHER" id="PTHR12308:SF22">
    <property type="entry name" value="ANOCTAMIN-7"/>
    <property type="match status" value="1"/>
</dbReference>
<dbReference type="Pfam" id="PF16178">
    <property type="entry name" value="Anoct_dimer"/>
    <property type="match status" value="1"/>
</dbReference>
<dbReference type="Pfam" id="PF04547">
    <property type="entry name" value="Anoctamin"/>
    <property type="match status" value="1"/>
</dbReference>
<keyword id="KW-0025">Alternative splicing</keyword>
<keyword id="KW-0965">Cell junction</keyword>
<keyword id="KW-1003">Cell membrane</keyword>
<keyword id="KW-0963">Cytoplasm</keyword>
<keyword id="KW-0256">Endoplasmic reticulum</keyword>
<keyword id="KW-0325">Glycoprotein</keyword>
<keyword id="KW-0445">Lipid transport</keyword>
<keyword id="KW-0472">Membrane</keyword>
<keyword id="KW-1267">Proteomics identification</keyword>
<keyword id="KW-1185">Reference proteome</keyword>
<keyword id="KW-0812">Transmembrane</keyword>
<keyword id="KW-1133">Transmembrane helix</keyword>
<keyword id="KW-0813">Transport</keyword>